<protein>
    <recommendedName>
        <fullName evidence="1">ATP synthase subunit a</fullName>
    </recommendedName>
    <alternativeName>
        <fullName evidence="1">ATP synthase F0 sector subunit a</fullName>
    </alternativeName>
    <alternativeName>
        <fullName evidence="1">F-ATPase subunit 6</fullName>
    </alternativeName>
</protein>
<organism>
    <name type="scientific">Escherichia coli O7:K1 (strain IAI39 / ExPEC)</name>
    <dbReference type="NCBI Taxonomy" id="585057"/>
    <lineage>
        <taxon>Bacteria</taxon>
        <taxon>Pseudomonadati</taxon>
        <taxon>Pseudomonadota</taxon>
        <taxon>Gammaproteobacteria</taxon>
        <taxon>Enterobacterales</taxon>
        <taxon>Enterobacteriaceae</taxon>
        <taxon>Escherichia</taxon>
    </lineage>
</organism>
<sequence length="271" mass="30312">MASENMTPQDYIGHHLNNLQLDLRTFSLVDPHNPPATFWTINIDSMFFSVVLGLLFLVLFRSVAKKATSGVPGKFQTAIELVIGFVNGSVKDMYHGKSKLIAPLALTIFVWVFLMNLMDLLPIDLLPYIAEHVLGLPALRVVPSADVNVTLSMALGVFILILFYSIKMKGIGGFTKELTLQPFNHWAFIPVNLILEGVSLLSKPVSLGLRLFGNMYAGELIFILIAGLLPWWSQWILNVPWAIFHILIITLQAFIFMVLTIVYLSMASEEH</sequence>
<name>ATP6_ECO7I</name>
<evidence type="ECO:0000255" key="1">
    <source>
        <dbReference type="HAMAP-Rule" id="MF_01393"/>
    </source>
</evidence>
<reference key="1">
    <citation type="journal article" date="2009" name="PLoS Genet.">
        <title>Organised genome dynamics in the Escherichia coli species results in highly diverse adaptive paths.</title>
        <authorList>
            <person name="Touchon M."/>
            <person name="Hoede C."/>
            <person name="Tenaillon O."/>
            <person name="Barbe V."/>
            <person name="Baeriswyl S."/>
            <person name="Bidet P."/>
            <person name="Bingen E."/>
            <person name="Bonacorsi S."/>
            <person name="Bouchier C."/>
            <person name="Bouvet O."/>
            <person name="Calteau A."/>
            <person name="Chiapello H."/>
            <person name="Clermont O."/>
            <person name="Cruveiller S."/>
            <person name="Danchin A."/>
            <person name="Diard M."/>
            <person name="Dossat C."/>
            <person name="Karoui M.E."/>
            <person name="Frapy E."/>
            <person name="Garry L."/>
            <person name="Ghigo J.M."/>
            <person name="Gilles A.M."/>
            <person name="Johnson J."/>
            <person name="Le Bouguenec C."/>
            <person name="Lescat M."/>
            <person name="Mangenot S."/>
            <person name="Martinez-Jehanne V."/>
            <person name="Matic I."/>
            <person name="Nassif X."/>
            <person name="Oztas S."/>
            <person name="Petit M.A."/>
            <person name="Pichon C."/>
            <person name="Rouy Z."/>
            <person name="Ruf C.S."/>
            <person name="Schneider D."/>
            <person name="Tourret J."/>
            <person name="Vacherie B."/>
            <person name="Vallenet D."/>
            <person name="Medigue C."/>
            <person name="Rocha E.P.C."/>
            <person name="Denamur E."/>
        </authorList>
    </citation>
    <scope>NUCLEOTIDE SEQUENCE [LARGE SCALE GENOMIC DNA]</scope>
    <source>
        <strain>IAI39 / ExPEC</strain>
    </source>
</reference>
<accession>B7NR40</accession>
<keyword id="KW-0066">ATP synthesis</keyword>
<keyword id="KW-0997">Cell inner membrane</keyword>
<keyword id="KW-1003">Cell membrane</keyword>
<keyword id="KW-0138">CF(0)</keyword>
<keyword id="KW-0375">Hydrogen ion transport</keyword>
<keyword id="KW-0406">Ion transport</keyword>
<keyword id="KW-0472">Membrane</keyword>
<keyword id="KW-0812">Transmembrane</keyword>
<keyword id="KW-1133">Transmembrane helix</keyword>
<keyword id="KW-0813">Transport</keyword>
<feature type="chain" id="PRO_1000145271" description="ATP synthase subunit a">
    <location>
        <begin position="1"/>
        <end position="271"/>
    </location>
</feature>
<feature type="transmembrane region" description="Helical" evidence="1">
    <location>
        <begin position="40"/>
        <end position="60"/>
    </location>
</feature>
<feature type="transmembrane region" description="Helical" evidence="1">
    <location>
        <begin position="100"/>
        <end position="120"/>
    </location>
</feature>
<feature type="transmembrane region" description="Helical" evidence="1">
    <location>
        <begin position="146"/>
        <end position="166"/>
    </location>
</feature>
<feature type="transmembrane region" description="Helical" evidence="1">
    <location>
        <begin position="220"/>
        <end position="240"/>
    </location>
</feature>
<feature type="transmembrane region" description="Helical" evidence="1">
    <location>
        <begin position="242"/>
        <end position="262"/>
    </location>
</feature>
<dbReference type="EMBL" id="CU928164">
    <property type="protein sequence ID" value="CAR20448.1"/>
    <property type="molecule type" value="Genomic_DNA"/>
</dbReference>
<dbReference type="RefSeq" id="WP_000135618.1">
    <property type="nucleotide sequence ID" value="NC_011750.1"/>
</dbReference>
<dbReference type="RefSeq" id="YP_002410217.1">
    <property type="nucleotide sequence ID" value="NC_011750.1"/>
</dbReference>
<dbReference type="SMR" id="B7NR40"/>
<dbReference type="STRING" id="585057.ECIAI39_4342"/>
<dbReference type="GeneID" id="86948620"/>
<dbReference type="KEGG" id="ect:ECIAI39_4342"/>
<dbReference type="PATRIC" id="fig|585057.6.peg.4487"/>
<dbReference type="HOGENOM" id="CLU_041018_1_0_6"/>
<dbReference type="Proteomes" id="UP000000749">
    <property type="component" value="Chromosome"/>
</dbReference>
<dbReference type="GO" id="GO:0005886">
    <property type="term" value="C:plasma membrane"/>
    <property type="evidence" value="ECO:0007669"/>
    <property type="project" value="UniProtKB-SubCell"/>
</dbReference>
<dbReference type="GO" id="GO:0045259">
    <property type="term" value="C:proton-transporting ATP synthase complex"/>
    <property type="evidence" value="ECO:0007669"/>
    <property type="project" value="UniProtKB-KW"/>
</dbReference>
<dbReference type="GO" id="GO:0046933">
    <property type="term" value="F:proton-transporting ATP synthase activity, rotational mechanism"/>
    <property type="evidence" value="ECO:0007669"/>
    <property type="project" value="UniProtKB-UniRule"/>
</dbReference>
<dbReference type="GO" id="GO:0042777">
    <property type="term" value="P:proton motive force-driven plasma membrane ATP synthesis"/>
    <property type="evidence" value="ECO:0007669"/>
    <property type="project" value="TreeGrafter"/>
</dbReference>
<dbReference type="CDD" id="cd00310">
    <property type="entry name" value="ATP-synt_Fo_a_6"/>
    <property type="match status" value="1"/>
</dbReference>
<dbReference type="FunFam" id="1.20.120.220:FF:000002">
    <property type="entry name" value="ATP synthase subunit a"/>
    <property type="match status" value="1"/>
</dbReference>
<dbReference type="Gene3D" id="1.20.120.220">
    <property type="entry name" value="ATP synthase, F0 complex, subunit A"/>
    <property type="match status" value="1"/>
</dbReference>
<dbReference type="HAMAP" id="MF_01393">
    <property type="entry name" value="ATP_synth_a_bact"/>
    <property type="match status" value="1"/>
</dbReference>
<dbReference type="InterPro" id="IPR045082">
    <property type="entry name" value="ATP_syn_F0_a_bact/chloroplast"/>
</dbReference>
<dbReference type="InterPro" id="IPR000568">
    <property type="entry name" value="ATP_synth_F0_asu"/>
</dbReference>
<dbReference type="InterPro" id="IPR023011">
    <property type="entry name" value="ATP_synth_F0_asu_AS"/>
</dbReference>
<dbReference type="InterPro" id="IPR035908">
    <property type="entry name" value="F0_ATP_A_sf"/>
</dbReference>
<dbReference type="NCBIfam" id="TIGR01131">
    <property type="entry name" value="ATP_synt_6_or_A"/>
    <property type="match status" value="1"/>
</dbReference>
<dbReference type="NCBIfam" id="NF004477">
    <property type="entry name" value="PRK05815.1-1"/>
    <property type="match status" value="1"/>
</dbReference>
<dbReference type="PANTHER" id="PTHR42823">
    <property type="entry name" value="ATP SYNTHASE SUBUNIT A, CHLOROPLASTIC"/>
    <property type="match status" value="1"/>
</dbReference>
<dbReference type="PANTHER" id="PTHR42823:SF3">
    <property type="entry name" value="ATP SYNTHASE SUBUNIT A, CHLOROPLASTIC"/>
    <property type="match status" value="1"/>
</dbReference>
<dbReference type="Pfam" id="PF00119">
    <property type="entry name" value="ATP-synt_A"/>
    <property type="match status" value="1"/>
</dbReference>
<dbReference type="PRINTS" id="PR00123">
    <property type="entry name" value="ATPASEA"/>
</dbReference>
<dbReference type="SUPFAM" id="SSF81336">
    <property type="entry name" value="F1F0 ATP synthase subunit A"/>
    <property type="match status" value="1"/>
</dbReference>
<dbReference type="PROSITE" id="PS00449">
    <property type="entry name" value="ATPASE_A"/>
    <property type="match status" value="1"/>
</dbReference>
<comment type="function">
    <text evidence="1">Key component of the proton channel; it plays a direct role in the translocation of protons across the membrane.</text>
</comment>
<comment type="subunit">
    <text evidence="1">F-type ATPases have 2 components, CF(1) - the catalytic core - and CF(0) - the membrane proton channel. CF(1) has five subunits: alpha(3), beta(3), gamma(1), delta(1), epsilon(1). CF(0) has three main subunits: a(1), b(2) and c(9-12). The alpha and beta chains form an alternating ring which encloses part of the gamma chain. CF(1) is attached to CF(0) by a central stalk formed by the gamma and epsilon chains, while a peripheral stalk is formed by the delta and b chains.</text>
</comment>
<comment type="subcellular location">
    <subcellularLocation>
        <location evidence="1">Cell inner membrane</location>
        <topology evidence="1">Multi-pass membrane protein</topology>
    </subcellularLocation>
</comment>
<comment type="similarity">
    <text evidence="1">Belongs to the ATPase A chain family.</text>
</comment>
<gene>
    <name evidence="1" type="primary">atpB</name>
    <name type="ordered locus">ECIAI39_4342</name>
</gene>
<proteinExistence type="inferred from homology"/>